<keyword id="KW-0333">Golgi apparatus</keyword>
<keyword id="KW-0472">Membrane</keyword>
<keyword id="KW-1185">Reference proteome</keyword>
<keyword id="KW-0812">Transmembrane</keyword>
<keyword id="KW-1133">Transmembrane helix</keyword>
<reference key="1">
    <citation type="journal article" date="2008" name="Genome Biol.">
        <title>The genome sequence of the model ascomycete fungus Podospora anserina.</title>
        <authorList>
            <person name="Espagne E."/>
            <person name="Lespinet O."/>
            <person name="Malagnac F."/>
            <person name="Da Silva C."/>
            <person name="Jaillon O."/>
            <person name="Porcel B.M."/>
            <person name="Couloux A."/>
            <person name="Aury J.-M."/>
            <person name="Segurens B."/>
            <person name="Poulain J."/>
            <person name="Anthouard V."/>
            <person name="Grossetete S."/>
            <person name="Khalili H."/>
            <person name="Coppin E."/>
            <person name="Dequard-Chablat M."/>
            <person name="Picard M."/>
            <person name="Contamine V."/>
            <person name="Arnaise S."/>
            <person name="Bourdais A."/>
            <person name="Berteaux-Lecellier V."/>
            <person name="Gautheret D."/>
            <person name="de Vries R.P."/>
            <person name="Battaglia E."/>
            <person name="Coutinho P.M."/>
            <person name="Danchin E.G.J."/>
            <person name="Henrissat B."/>
            <person name="El Khoury R."/>
            <person name="Sainsard-Chanet A."/>
            <person name="Boivin A."/>
            <person name="Pinan-Lucarre B."/>
            <person name="Sellem C.H."/>
            <person name="Debuchy R."/>
            <person name="Wincker P."/>
            <person name="Weissenbach J."/>
            <person name="Silar P."/>
        </authorList>
    </citation>
    <scope>NUCLEOTIDE SEQUENCE [LARGE SCALE GENOMIC DNA]</scope>
    <source>
        <strain>S / ATCC MYA-4624 / DSM 980 / FGSC 10383</strain>
    </source>
</reference>
<reference key="2">
    <citation type="journal article" date="2014" name="Genetics">
        <title>Maintaining two mating types: Structure of the mating type locus and its role in heterokaryosis in Podospora anserina.</title>
        <authorList>
            <person name="Grognet P."/>
            <person name="Bidard F."/>
            <person name="Kuchly C."/>
            <person name="Tong L.C.H."/>
            <person name="Coppin E."/>
            <person name="Benkhali J.A."/>
            <person name="Couloux A."/>
            <person name="Wincker P."/>
            <person name="Debuchy R."/>
            <person name="Silar P."/>
        </authorList>
    </citation>
    <scope>GENOME REANNOTATION</scope>
    <source>
        <strain>S / ATCC MYA-4624 / DSM 980 / FGSC 10383</strain>
    </source>
</reference>
<name>TVP38_PODAN</name>
<dbReference type="EMBL" id="CU633870">
    <property type="protein sequence ID" value="CAP65116.1"/>
    <property type="molecule type" value="Genomic_DNA"/>
</dbReference>
<dbReference type="EMBL" id="FO904940">
    <property type="protein sequence ID" value="CDP29795.1"/>
    <property type="molecule type" value="Genomic_DNA"/>
</dbReference>
<dbReference type="RefSeq" id="XP_001905208.1">
    <property type="nucleotide sequence ID" value="XM_001905173.1"/>
</dbReference>
<dbReference type="SMR" id="B2AMJ3"/>
<dbReference type="STRING" id="515849.B2AMJ3"/>
<dbReference type="GeneID" id="6189338"/>
<dbReference type="KEGG" id="pan:PODANSg2231"/>
<dbReference type="VEuPathDB" id="FungiDB:PODANS_5_6980"/>
<dbReference type="eggNOG" id="KOG3140">
    <property type="taxonomic scope" value="Eukaryota"/>
</dbReference>
<dbReference type="HOGENOM" id="CLU_021545_0_0_1"/>
<dbReference type="InParanoid" id="B2AMJ3"/>
<dbReference type="OrthoDB" id="166803at2759"/>
<dbReference type="Proteomes" id="UP000001197">
    <property type="component" value="Chromosome 5"/>
</dbReference>
<dbReference type="GO" id="GO:0000139">
    <property type="term" value="C:Golgi membrane"/>
    <property type="evidence" value="ECO:0007669"/>
    <property type="project" value="UniProtKB-SubCell"/>
</dbReference>
<dbReference type="InterPro" id="IPR051076">
    <property type="entry name" value="Golgi_membrane_TVP38/TMEM64"/>
</dbReference>
<dbReference type="InterPro" id="IPR032816">
    <property type="entry name" value="VTT_dom"/>
</dbReference>
<dbReference type="PANTHER" id="PTHR47549:SF2">
    <property type="entry name" value="GOLGI APPARATUS MEMBRANE PROTEIN TVP38"/>
    <property type="match status" value="1"/>
</dbReference>
<dbReference type="PANTHER" id="PTHR47549">
    <property type="entry name" value="GOLGI APPARATUS MEMBRANE PROTEIN TVP38-RELATED"/>
    <property type="match status" value="1"/>
</dbReference>
<dbReference type="Pfam" id="PF09335">
    <property type="entry name" value="VTT_dom"/>
    <property type="match status" value="1"/>
</dbReference>
<feature type="chain" id="PRO_0000343073" description="Golgi apparatus membrane protein TVP38">
    <location>
        <begin position="1"/>
        <end position="378"/>
    </location>
</feature>
<feature type="topological domain" description="Lumenal" evidence="2">
    <location>
        <begin position="1"/>
        <end position="37"/>
    </location>
</feature>
<feature type="transmembrane region" description="Helical" evidence="2">
    <location>
        <begin position="38"/>
        <end position="58"/>
    </location>
</feature>
<feature type="topological domain" description="Cytoplasmic" evidence="2">
    <location>
        <begin position="59"/>
        <end position="99"/>
    </location>
</feature>
<feature type="transmembrane region" description="Helical" evidence="2">
    <location>
        <begin position="100"/>
        <end position="120"/>
    </location>
</feature>
<feature type="topological domain" description="Lumenal" evidence="2">
    <location>
        <begin position="121"/>
        <end position="123"/>
    </location>
</feature>
<feature type="transmembrane region" description="Helical" evidence="2">
    <location>
        <begin position="124"/>
        <end position="144"/>
    </location>
</feature>
<feature type="topological domain" description="Cytoplasmic" evidence="2">
    <location>
        <begin position="145"/>
        <end position="213"/>
    </location>
</feature>
<feature type="transmembrane region" description="Helical" evidence="2">
    <location>
        <begin position="214"/>
        <end position="234"/>
    </location>
</feature>
<feature type="topological domain" description="Lumenal" evidence="2">
    <location>
        <begin position="235"/>
        <end position="249"/>
    </location>
</feature>
<feature type="transmembrane region" description="Helical" evidence="2">
    <location>
        <begin position="250"/>
        <end position="270"/>
    </location>
</feature>
<feature type="topological domain" description="Cytoplasmic" evidence="2">
    <location>
        <begin position="271"/>
        <end position="378"/>
    </location>
</feature>
<feature type="region of interest" description="Disordered" evidence="3">
    <location>
        <begin position="1"/>
        <end position="20"/>
    </location>
</feature>
<feature type="region of interest" description="VTT domain" evidence="1">
    <location>
        <begin position="130"/>
        <end position="238"/>
    </location>
</feature>
<feature type="region of interest" description="Disordered" evidence="3">
    <location>
        <begin position="322"/>
        <end position="378"/>
    </location>
</feature>
<feature type="compositionally biased region" description="Polar residues" evidence="3">
    <location>
        <begin position="340"/>
        <end position="358"/>
    </location>
</feature>
<proteinExistence type="inferred from homology"/>
<evidence type="ECO:0000250" key="1">
    <source>
        <dbReference type="UniProtKB" id="P36164"/>
    </source>
</evidence>
<evidence type="ECO:0000255" key="2"/>
<evidence type="ECO:0000256" key="3">
    <source>
        <dbReference type="SAM" id="MobiDB-lite"/>
    </source>
</evidence>
<evidence type="ECO:0000305" key="4"/>
<protein>
    <recommendedName>
        <fullName>Golgi apparatus membrane protein TVP38</fullName>
    </recommendedName>
</protein>
<gene>
    <name type="primary">TVP38</name>
    <name type="ordered locus">Pa_5_6980</name>
    <name type="ORF">PODANS_5_6980</name>
</gene>
<organism>
    <name type="scientific">Podospora anserina (strain S / ATCC MYA-4624 / DSM 980 / FGSC 10383)</name>
    <name type="common">Pleurage anserina</name>
    <dbReference type="NCBI Taxonomy" id="515849"/>
    <lineage>
        <taxon>Eukaryota</taxon>
        <taxon>Fungi</taxon>
        <taxon>Dikarya</taxon>
        <taxon>Ascomycota</taxon>
        <taxon>Pezizomycotina</taxon>
        <taxon>Sordariomycetes</taxon>
        <taxon>Sordariomycetidae</taxon>
        <taxon>Sordariales</taxon>
        <taxon>Podosporaceae</taxon>
        <taxon>Podospora</taxon>
        <taxon>Podospora anserina</taxon>
    </lineage>
</organism>
<comment type="function">
    <text>Golgi membrane protein involved in vesicular trafficking and spindle migration.</text>
</comment>
<comment type="subcellular location">
    <subcellularLocation>
        <location>Golgi apparatus membrane</location>
        <topology>Multi-pass membrane protein</topology>
    </subcellularLocation>
</comment>
<comment type="domain">
    <text evidence="1">The VTT domain was previously called the SNARE-assoc domain. As there is no evidence that this domain associates with SNARE proteins, it was renamed as VMP1, TMEM41, and TVP38 (VTT) domain.</text>
</comment>
<comment type="similarity">
    <text evidence="4">Belongs to the TVP38/TMEM64 family.</text>
</comment>
<sequence>MGPDEIEMVPPKTPRGLPPSETDYQPVNWKRLFLRPKYLAMWVVLVIIIILTAIITIYHDKVVEVGDIRHFDNVCGGKQEILTAHPLQHLRPFAEQVRHLPGGWLIPIVILIVISFPPLFGHEIIALLCGVVYGLWIGFGIVAAGTFLGEVGTWFAFKYLFRQKSEKLERTSLSYGALARITRDGGFWIVLIIRFSAIPTHFSTAVFSTCGVNFWIFAIATFLTLPKQIFLVYLGVLLLQDKPDDAPKNIVFGIAFVLTIVMAGYIGFKMRFVKKILIEEQEERRKALAMPTMDDTVNTGDGVLDTERSEYEALSQNDFSIAMPGPAAGNHTPLGEPSKGPSTAPSGWTTEAVNTPDSPGTPPNEYFGQQPAKGFQWV</sequence>
<accession>B2AMJ3</accession>
<accession>A0A090CMY0</accession>